<protein>
    <recommendedName>
        <fullName>mRNA interferase HigB</fullName>
        <ecNumber>3.1.-.-</ecNumber>
    </recommendedName>
    <alternativeName>
        <fullName>Endoribonuclease HigB</fullName>
    </alternativeName>
    <alternativeName>
        <fullName>Toxin HigB</fullName>
    </alternativeName>
</protein>
<evidence type="ECO:0000250" key="1">
    <source>
        <dbReference type="UniProtKB" id="P64578"/>
    </source>
</evidence>
<evidence type="ECO:0000269" key="2">
    <source>
    </source>
</evidence>
<evidence type="ECO:0000305" key="3"/>
<proteinExistence type="inferred from homology"/>
<accession>Q8FEM8</accession>
<keyword id="KW-0255">Endonuclease</keyword>
<keyword id="KW-0378">Hydrolase</keyword>
<keyword id="KW-0540">Nuclease</keyword>
<keyword id="KW-1185">Reference proteome</keyword>
<keyword id="KW-0694">RNA-binding</keyword>
<keyword id="KW-1277">Toxin-antitoxin system</keyword>
<feature type="chain" id="PRO_0000420795" description="mRNA interferase HigB">
    <location>
        <begin position="1"/>
        <end position="103"/>
    </location>
</feature>
<comment type="function">
    <text evidence="1">Toxic component of a type II toxin-antitoxin (TA) system. A probable translation-dependent mRNA interferase. Probably counteracted by antitoxin HigA.</text>
</comment>
<comment type="subunit">
    <text evidence="1">Probably forms a complex with the antitoxin HigA which inhibits the mRNA interferase activity.</text>
</comment>
<comment type="disruption phenotype">
    <text evidence="2">Deletion of the higB-higA operon has no effect on virulence in mouse infection; the disrupted strain is as virulent as wild-type.</text>
</comment>
<comment type="similarity">
    <text evidence="3">Belongs to the HigB mRNA interferase family.</text>
</comment>
<organism>
    <name type="scientific">Escherichia coli O6:H1 (strain CFT073 / ATCC 700928 / UPEC)</name>
    <dbReference type="NCBI Taxonomy" id="199310"/>
    <lineage>
        <taxon>Bacteria</taxon>
        <taxon>Pseudomonadati</taxon>
        <taxon>Pseudomonadota</taxon>
        <taxon>Gammaproteobacteria</taxon>
        <taxon>Enterobacterales</taxon>
        <taxon>Enterobacteriaceae</taxon>
        <taxon>Escherichia</taxon>
    </lineage>
</organism>
<sequence length="103" mass="12439">MHIISKAPFEECARKYPNDALALHSLYRVIKETDFSTPEEMRTAFPNLDNFKYRNKWYVLDVGGNNLRVIAYINFVNKRFFVKHITNHAEYDKLTRYYRENKE</sequence>
<name>HIGB_ECOL6</name>
<reference key="1">
    <citation type="journal article" date="2002" name="Proc. Natl. Acad. Sci. U.S.A.">
        <title>Extensive mosaic structure revealed by the complete genome sequence of uropathogenic Escherichia coli.</title>
        <authorList>
            <person name="Welch R.A."/>
            <person name="Burland V."/>
            <person name="Plunkett G. III"/>
            <person name="Redford P."/>
            <person name="Roesch P."/>
            <person name="Rasko D."/>
            <person name="Buckles E.L."/>
            <person name="Liou S.-R."/>
            <person name="Boutin A."/>
            <person name="Hackett J."/>
            <person name="Stroud D."/>
            <person name="Mayhew G.F."/>
            <person name="Rose D.J."/>
            <person name="Zhou S."/>
            <person name="Schwartz D.C."/>
            <person name="Perna N.T."/>
            <person name="Mobley H.L.T."/>
            <person name="Donnenberg M.S."/>
            <person name="Blattner F.R."/>
        </authorList>
    </citation>
    <scope>NUCLEOTIDE SEQUENCE [LARGE SCALE GENOMIC DNA]</scope>
    <source>
        <strain>CFT073 / ATCC 700928 / UPEC</strain>
    </source>
</reference>
<reference key="2">
    <citation type="journal article" date="2012" name="PLoS Pathog.">
        <title>Toxin-antitoxin systems are important for niche-specific colonization and stress resistance of uropathogenic Escherichia coli.</title>
        <authorList>
            <person name="Norton J.P."/>
            <person name="Mulvey M.A."/>
        </authorList>
    </citation>
    <scope>DISRUPTION PHENOTYPE</scope>
    <source>
        <strain>CFT073 / ATCC 700928 / UPEC</strain>
    </source>
</reference>
<dbReference type="EC" id="3.1.-.-"/>
<dbReference type="EMBL" id="AE014075">
    <property type="protein sequence ID" value="AAN81723.1"/>
    <property type="molecule type" value="Genomic_DNA"/>
</dbReference>
<dbReference type="RefSeq" id="WP_000547555.1">
    <property type="nucleotide sequence ID" value="NZ_CP051263.1"/>
</dbReference>
<dbReference type="SMR" id="Q8FEM8"/>
<dbReference type="STRING" id="199310.c3274"/>
<dbReference type="KEGG" id="ecc:c3274"/>
<dbReference type="eggNOG" id="COG4680">
    <property type="taxonomic scope" value="Bacteria"/>
</dbReference>
<dbReference type="HOGENOM" id="CLU_153067_0_0_6"/>
<dbReference type="BioCyc" id="ECOL199310:C3274-MONOMER"/>
<dbReference type="Proteomes" id="UP000001410">
    <property type="component" value="Chromosome"/>
</dbReference>
<dbReference type="GO" id="GO:0110001">
    <property type="term" value="C:toxin-antitoxin complex"/>
    <property type="evidence" value="ECO:0007669"/>
    <property type="project" value="InterPro"/>
</dbReference>
<dbReference type="GO" id="GO:0004519">
    <property type="term" value="F:endonuclease activity"/>
    <property type="evidence" value="ECO:0007669"/>
    <property type="project" value="UniProtKB-KW"/>
</dbReference>
<dbReference type="GO" id="GO:0003723">
    <property type="term" value="F:RNA binding"/>
    <property type="evidence" value="ECO:0007669"/>
    <property type="project" value="UniProtKB-KW"/>
</dbReference>
<dbReference type="InterPro" id="IPR018669">
    <property type="entry name" value="Toxin_HigB"/>
</dbReference>
<dbReference type="Pfam" id="PF09907">
    <property type="entry name" value="HigB_toxin"/>
    <property type="match status" value="1"/>
</dbReference>
<gene>
    <name type="primary">higB</name>
    <name type="ordered locus">c3274</name>
</gene>